<comment type="function">
    <text evidence="1">Involved in the aerobic and anaerobic degradation of long-chain fatty acids via beta-oxidation cycle. Catalyzes the formation of 3-oxoacyl-CoA from enoyl-CoA via L-3-hydroxyacyl-CoA. It can also use D-3-hydroxyacyl-CoA and cis-3-enoyl-CoA as substrate.</text>
</comment>
<comment type="catalytic activity">
    <reaction evidence="1">
        <text>a (3S)-3-hydroxyacyl-CoA + NAD(+) = a 3-oxoacyl-CoA + NADH + H(+)</text>
        <dbReference type="Rhea" id="RHEA:22432"/>
        <dbReference type="ChEBI" id="CHEBI:15378"/>
        <dbReference type="ChEBI" id="CHEBI:57318"/>
        <dbReference type="ChEBI" id="CHEBI:57540"/>
        <dbReference type="ChEBI" id="CHEBI:57945"/>
        <dbReference type="ChEBI" id="CHEBI:90726"/>
        <dbReference type="EC" id="1.1.1.35"/>
    </reaction>
</comment>
<comment type="catalytic activity">
    <reaction evidence="1">
        <text>a (3S)-3-hydroxyacyl-CoA = a (2E)-enoyl-CoA + H2O</text>
        <dbReference type="Rhea" id="RHEA:16105"/>
        <dbReference type="ChEBI" id="CHEBI:15377"/>
        <dbReference type="ChEBI" id="CHEBI:57318"/>
        <dbReference type="ChEBI" id="CHEBI:58856"/>
        <dbReference type="EC" id="4.2.1.17"/>
    </reaction>
</comment>
<comment type="catalytic activity">
    <reaction evidence="1">
        <text>a 4-saturated-(3S)-3-hydroxyacyl-CoA = a (3E)-enoyl-CoA + H2O</text>
        <dbReference type="Rhea" id="RHEA:20724"/>
        <dbReference type="ChEBI" id="CHEBI:15377"/>
        <dbReference type="ChEBI" id="CHEBI:58521"/>
        <dbReference type="ChEBI" id="CHEBI:137480"/>
        <dbReference type="EC" id="4.2.1.17"/>
    </reaction>
</comment>
<comment type="catalytic activity">
    <reaction evidence="1">
        <text>(3S)-3-hydroxybutanoyl-CoA = (3R)-3-hydroxybutanoyl-CoA</text>
        <dbReference type="Rhea" id="RHEA:21760"/>
        <dbReference type="ChEBI" id="CHEBI:57315"/>
        <dbReference type="ChEBI" id="CHEBI:57316"/>
        <dbReference type="EC" id="5.1.2.3"/>
    </reaction>
</comment>
<comment type="catalytic activity">
    <reaction evidence="1">
        <text>a (3Z)-enoyl-CoA = a 4-saturated (2E)-enoyl-CoA</text>
        <dbReference type="Rhea" id="RHEA:45900"/>
        <dbReference type="ChEBI" id="CHEBI:85097"/>
        <dbReference type="ChEBI" id="CHEBI:85489"/>
        <dbReference type="EC" id="5.3.3.8"/>
    </reaction>
</comment>
<comment type="catalytic activity">
    <reaction evidence="1">
        <text>a (3E)-enoyl-CoA = a 4-saturated (2E)-enoyl-CoA</text>
        <dbReference type="Rhea" id="RHEA:45228"/>
        <dbReference type="ChEBI" id="CHEBI:58521"/>
        <dbReference type="ChEBI" id="CHEBI:85097"/>
        <dbReference type="EC" id="5.3.3.8"/>
    </reaction>
</comment>
<comment type="pathway">
    <text evidence="1">Lipid metabolism; fatty acid beta-oxidation.</text>
</comment>
<comment type="subunit">
    <text evidence="1">Heterotetramer of two alpha chains (FadB) and two beta chains (FadA).</text>
</comment>
<comment type="similarity">
    <text evidence="1">In the N-terminal section; belongs to the enoyl-CoA hydratase/isomerase family.</text>
</comment>
<comment type="similarity">
    <text evidence="1">In the C-terminal section; belongs to the 3-hydroxyacyl-CoA dehydrogenase family.</text>
</comment>
<accession>A0KEL1</accession>
<name>FADB_AERHH</name>
<evidence type="ECO:0000255" key="1">
    <source>
        <dbReference type="HAMAP-Rule" id="MF_01621"/>
    </source>
</evidence>
<keyword id="KW-0276">Fatty acid metabolism</keyword>
<keyword id="KW-0413">Isomerase</keyword>
<keyword id="KW-0442">Lipid degradation</keyword>
<keyword id="KW-0443">Lipid metabolism</keyword>
<keyword id="KW-0456">Lyase</keyword>
<keyword id="KW-0511">Multifunctional enzyme</keyword>
<keyword id="KW-0520">NAD</keyword>
<keyword id="KW-0560">Oxidoreductase</keyword>
<keyword id="KW-1185">Reference proteome</keyword>
<feature type="chain" id="PRO_1000069557" description="Fatty acid oxidation complex subunit alpha">
    <location>
        <begin position="1"/>
        <end position="715"/>
    </location>
</feature>
<feature type="region of interest" description="Enoyl-CoA hydratase/isomerase" evidence="1">
    <location>
        <begin position="1"/>
        <end position="189"/>
    </location>
</feature>
<feature type="region of interest" description="3-hydroxyacyl-CoA dehydrogenase" evidence="1">
    <location>
        <begin position="311"/>
        <end position="715"/>
    </location>
</feature>
<feature type="active site" description="For 3-hydroxyacyl-CoA dehydrogenase activity" evidence="1">
    <location>
        <position position="451"/>
    </location>
</feature>
<feature type="binding site" evidence="1">
    <location>
        <position position="296"/>
    </location>
    <ligand>
        <name>substrate</name>
    </ligand>
</feature>
<feature type="binding site" evidence="1">
    <location>
        <position position="325"/>
    </location>
    <ligand>
        <name>NAD(+)</name>
        <dbReference type="ChEBI" id="CHEBI:57540"/>
    </ligand>
</feature>
<feature type="binding site" evidence="1">
    <location>
        <position position="344"/>
    </location>
    <ligand>
        <name>NAD(+)</name>
        <dbReference type="ChEBI" id="CHEBI:57540"/>
    </ligand>
</feature>
<feature type="binding site" evidence="1">
    <location>
        <begin position="401"/>
        <end position="403"/>
    </location>
    <ligand>
        <name>NAD(+)</name>
        <dbReference type="ChEBI" id="CHEBI:57540"/>
    </ligand>
</feature>
<feature type="binding site" evidence="1">
    <location>
        <position position="408"/>
    </location>
    <ligand>
        <name>NAD(+)</name>
        <dbReference type="ChEBI" id="CHEBI:57540"/>
    </ligand>
</feature>
<feature type="binding site" evidence="1">
    <location>
        <position position="430"/>
    </location>
    <ligand>
        <name>NAD(+)</name>
        <dbReference type="ChEBI" id="CHEBI:57540"/>
    </ligand>
</feature>
<feature type="binding site" evidence="1">
    <location>
        <position position="454"/>
    </location>
    <ligand>
        <name>NAD(+)</name>
        <dbReference type="ChEBI" id="CHEBI:57540"/>
    </ligand>
</feature>
<feature type="binding site" evidence="1">
    <location>
        <position position="501"/>
    </location>
    <ligand>
        <name>substrate</name>
    </ligand>
</feature>
<feature type="binding site" evidence="1">
    <location>
        <position position="661"/>
    </location>
    <ligand>
        <name>substrate</name>
    </ligand>
</feature>
<feature type="site" description="Important for catalytic activity" evidence="1">
    <location>
        <position position="119"/>
    </location>
</feature>
<feature type="site" description="Important for catalytic activity" evidence="1">
    <location>
        <position position="139"/>
    </location>
</feature>
<reference key="1">
    <citation type="journal article" date="2006" name="J. Bacteriol.">
        <title>Genome sequence of Aeromonas hydrophila ATCC 7966T: jack of all trades.</title>
        <authorList>
            <person name="Seshadri R."/>
            <person name="Joseph S.W."/>
            <person name="Chopra A.K."/>
            <person name="Sha J."/>
            <person name="Shaw J."/>
            <person name="Graf J."/>
            <person name="Haft D.H."/>
            <person name="Wu M."/>
            <person name="Ren Q."/>
            <person name="Rosovitz M.J."/>
            <person name="Madupu R."/>
            <person name="Tallon L."/>
            <person name="Kim M."/>
            <person name="Jin S."/>
            <person name="Vuong H."/>
            <person name="Stine O.C."/>
            <person name="Ali A."/>
            <person name="Horneman A.J."/>
            <person name="Heidelberg J.F."/>
        </authorList>
    </citation>
    <scope>NUCLEOTIDE SEQUENCE [LARGE SCALE GENOMIC DNA]</scope>
    <source>
        <strain>ATCC 7966 / DSM 30187 / BCRC 13018 / CCUG 14551 / JCM 1027 / KCTC 2358 / NCIMB 9240 / NCTC 8049</strain>
    </source>
</reference>
<dbReference type="EC" id="4.2.1.17" evidence="1"/>
<dbReference type="EC" id="5.1.2.3" evidence="1"/>
<dbReference type="EC" id="5.3.3.8" evidence="1"/>
<dbReference type="EC" id="1.1.1.35" evidence="1"/>
<dbReference type="EMBL" id="CP000462">
    <property type="protein sequence ID" value="ABK38031.1"/>
    <property type="molecule type" value="Genomic_DNA"/>
</dbReference>
<dbReference type="RefSeq" id="WP_011704165.1">
    <property type="nucleotide sequence ID" value="NC_008570.1"/>
</dbReference>
<dbReference type="RefSeq" id="YP_854676.1">
    <property type="nucleotide sequence ID" value="NC_008570.1"/>
</dbReference>
<dbReference type="SMR" id="A0KEL1"/>
<dbReference type="STRING" id="380703.AHA_0139"/>
<dbReference type="EnsemblBacteria" id="ABK38031">
    <property type="protein sequence ID" value="ABK38031"/>
    <property type="gene ID" value="AHA_0139"/>
</dbReference>
<dbReference type="GeneID" id="4490320"/>
<dbReference type="KEGG" id="aha:AHA_0139"/>
<dbReference type="PATRIC" id="fig|380703.7.peg.132"/>
<dbReference type="eggNOG" id="COG1024">
    <property type="taxonomic scope" value="Bacteria"/>
</dbReference>
<dbReference type="eggNOG" id="COG1250">
    <property type="taxonomic scope" value="Bacteria"/>
</dbReference>
<dbReference type="HOGENOM" id="CLU_009834_16_3_6"/>
<dbReference type="OrthoDB" id="5389341at2"/>
<dbReference type="UniPathway" id="UPA00659"/>
<dbReference type="Proteomes" id="UP000000756">
    <property type="component" value="Chromosome"/>
</dbReference>
<dbReference type="GO" id="GO:0036125">
    <property type="term" value="C:fatty acid beta-oxidation multienzyme complex"/>
    <property type="evidence" value="ECO:0007669"/>
    <property type="project" value="InterPro"/>
</dbReference>
<dbReference type="GO" id="GO:0008692">
    <property type="term" value="F:3-hydroxybutyryl-CoA epimerase activity"/>
    <property type="evidence" value="ECO:0007669"/>
    <property type="project" value="UniProtKB-UniRule"/>
</dbReference>
<dbReference type="GO" id="GO:0004165">
    <property type="term" value="F:delta(3)-delta(2)-enoyl-CoA isomerase activity"/>
    <property type="evidence" value="ECO:0007669"/>
    <property type="project" value="UniProtKB-UniRule"/>
</dbReference>
<dbReference type="GO" id="GO:0004300">
    <property type="term" value="F:enoyl-CoA hydratase activity"/>
    <property type="evidence" value="ECO:0007669"/>
    <property type="project" value="UniProtKB-UniRule"/>
</dbReference>
<dbReference type="GO" id="GO:0016509">
    <property type="term" value="F:long-chain-3-hydroxyacyl-CoA dehydrogenase activity"/>
    <property type="evidence" value="ECO:0007669"/>
    <property type="project" value="TreeGrafter"/>
</dbReference>
<dbReference type="GO" id="GO:0070403">
    <property type="term" value="F:NAD+ binding"/>
    <property type="evidence" value="ECO:0007669"/>
    <property type="project" value="InterPro"/>
</dbReference>
<dbReference type="GO" id="GO:0006635">
    <property type="term" value="P:fatty acid beta-oxidation"/>
    <property type="evidence" value="ECO:0007669"/>
    <property type="project" value="UniProtKB-UniRule"/>
</dbReference>
<dbReference type="CDD" id="cd06558">
    <property type="entry name" value="crotonase-like"/>
    <property type="match status" value="1"/>
</dbReference>
<dbReference type="FunFam" id="1.10.1040.50:FF:000001">
    <property type="entry name" value="Fatty acid oxidation complex subunit alpha"/>
    <property type="match status" value="1"/>
</dbReference>
<dbReference type="FunFam" id="3.40.50.720:FF:000009">
    <property type="entry name" value="Fatty oxidation complex, alpha subunit"/>
    <property type="match status" value="1"/>
</dbReference>
<dbReference type="Gene3D" id="1.10.1040.50">
    <property type="match status" value="1"/>
</dbReference>
<dbReference type="Gene3D" id="3.90.226.10">
    <property type="entry name" value="2-enoyl-CoA Hydratase, Chain A, domain 1"/>
    <property type="match status" value="1"/>
</dbReference>
<dbReference type="Gene3D" id="3.40.50.720">
    <property type="entry name" value="NAD(P)-binding Rossmann-like Domain"/>
    <property type="match status" value="1"/>
</dbReference>
<dbReference type="HAMAP" id="MF_01621">
    <property type="entry name" value="FadB"/>
    <property type="match status" value="1"/>
</dbReference>
<dbReference type="InterPro" id="IPR006180">
    <property type="entry name" value="3-OHacyl-CoA_DH_CS"/>
</dbReference>
<dbReference type="InterPro" id="IPR006176">
    <property type="entry name" value="3-OHacyl-CoA_DH_NAD-bd"/>
</dbReference>
<dbReference type="InterPro" id="IPR006108">
    <property type="entry name" value="3HC_DH_C"/>
</dbReference>
<dbReference type="InterPro" id="IPR008927">
    <property type="entry name" value="6-PGluconate_DH-like_C_sf"/>
</dbReference>
<dbReference type="InterPro" id="IPR029045">
    <property type="entry name" value="ClpP/crotonase-like_dom_sf"/>
</dbReference>
<dbReference type="InterPro" id="IPR001753">
    <property type="entry name" value="Enoyl-CoA_hydra/iso"/>
</dbReference>
<dbReference type="InterPro" id="IPR050136">
    <property type="entry name" value="FA_oxidation_alpha_subunit"/>
</dbReference>
<dbReference type="InterPro" id="IPR012799">
    <property type="entry name" value="FadB"/>
</dbReference>
<dbReference type="InterPro" id="IPR036291">
    <property type="entry name" value="NAD(P)-bd_dom_sf"/>
</dbReference>
<dbReference type="NCBIfam" id="TIGR02437">
    <property type="entry name" value="FadB"/>
    <property type="match status" value="1"/>
</dbReference>
<dbReference type="NCBIfam" id="NF008727">
    <property type="entry name" value="PRK11730.1"/>
    <property type="match status" value="1"/>
</dbReference>
<dbReference type="PANTHER" id="PTHR43612">
    <property type="entry name" value="TRIFUNCTIONAL ENZYME SUBUNIT ALPHA"/>
    <property type="match status" value="1"/>
</dbReference>
<dbReference type="PANTHER" id="PTHR43612:SF3">
    <property type="entry name" value="TRIFUNCTIONAL ENZYME SUBUNIT ALPHA, MITOCHONDRIAL"/>
    <property type="match status" value="1"/>
</dbReference>
<dbReference type="Pfam" id="PF00725">
    <property type="entry name" value="3HCDH"/>
    <property type="match status" value="2"/>
</dbReference>
<dbReference type="Pfam" id="PF02737">
    <property type="entry name" value="3HCDH_N"/>
    <property type="match status" value="1"/>
</dbReference>
<dbReference type="Pfam" id="PF00378">
    <property type="entry name" value="ECH_1"/>
    <property type="match status" value="1"/>
</dbReference>
<dbReference type="SUPFAM" id="SSF48179">
    <property type="entry name" value="6-phosphogluconate dehydrogenase C-terminal domain-like"/>
    <property type="match status" value="2"/>
</dbReference>
<dbReference type="SUPFAM" id="SSF52096">
    <property type="entry name" value="ClpP/crotonase"/>
    <property type="match status" value="1"/>
</dbReference>
<dbReference type="SUPFAM" id="SSF51735">
    <property type="entry name" value="NAD(P)-binding Rossmann-fold domains"/>
    <property type="match status" value="1"/>
</dbReference>
<dbReference type="PROSITE" id="PS00067">
    <property type="entry name" value="3HCDH"/>
    <property type="match status" value="1"/>
</dbReference>
<protein>
    <recommendedName>
        <fullName evidence="1">Fatty acid oxidation complex subunit alpha</fullName>
    </recommendedName>
    <domain>
        <recommendedName>
            <fullName evidence="1">Enoyl-CoA hydratase/Delta(3)-cis-Delta(2)-trans-enoyl-CoA isomerase/3-hydroxybutyryl-CoA epimerase</fullName>
            <ecNumber evidence="1">4.2.1.17</ecNumber>
            <ecNumber evidence="1">5.1.2.3</ecNumber>
            <ecNumber evidence="1">5.3.3.8</ecNumber>
        </recommendedName>
    </domain>
    <domain>
        <recommendedName>
            <fullName evidence="1">3-hydroxyacyl-CoA dehydrogenase</fullName>
            <ecNumber evidence="1">1.1.1.35</ecNumber>
        </recommendedName>
    </domain>
</protein>
<proteinExistence type="inferred from homology"/>
<organism>
    <name type="scientific">Aeromonas hydrophila subsp. hydrophila (strain ATCC 7966 / DSM 30187 / BCRC 13018 / CCUG 14551 / JCM 1027 / KCTC 2358 / NCIMB 9240 / NCTC 8049)</name>
    <dbReference type="NCBI Taxonomy" id="380703"/>
    <lineage>
        <taxon>Bacteria</taxon>
        <taxon>Pseudomonadati</taxon>
        <taxon>Pseudomonadota</taxon>
        <taxon>Gammaproteobacteria</taxon>
        <taxon>Aeromonadales</taxon>
        <taxon>Aeromonadaceae</taxon>
        <taxon>Aeromonas</taxon>
    </lineage>
</organism>
<gene>
    <name evidence="1" type="primary">fadB</name>
    <name type="ordered locus">AHA_0139</name>
</gene>
<sequence length="715" mass="76523">MIYQGETLTVSYLEDGIAELRFDAPGSVNKLDRATLLSLSEAIAALQQERELKGLILTSGKDAFIVGADITEFLELFDLPQADLLGWLKKANDIFSAIEDLPVPTLSAIKGHALGGGCETILSTDFRLADTSAKIGLPETKLGIMPGFGGTVRLPRVIGADNALEWITTGKDYRADDALKVGAIDAVVAPDALQSAAVQMIKDAVKGKLDWQGRRAAKKAPLRLSKLEAMMSFTTAAGMVAAVAGKHYPAPMTAVKTVEAAAGMSRDEALAVEAQGFIKLAKTDVAKALVGIFLNDQHIKALAKKAAKQAAKATSHAAVLGAGIMGGGIAYQSASKGIPAVMKDINEKALALGMGEATKLLNGQLEKGRIDGIKMGQVLSAITPTLSYDNVKHVDVVVEAVVENPKVKAAVLGEVEGIIGEDAVLASNTSTIPISLLAKELKRPQNFCGMHFFNPVHRMPLVEIIRGEQTSDETINRVVAYAAAMGKSPVVVNDCPGFFVNRVLFPYFFGFNKLVADGADFAAVDKVMEKEFGWPMGPAYLLDVVGIDTGHHAGDVMAQGFPARMSKEGRTAIDVMYEVNRFGQKNGKGFYAYEQDKKGKPKKVADAASYELLAPIAKPKQDFDKDAIIARMMIPMINEVVLCLEEGIVATPAEADIALVYGLGFPPFRGGVFRYLDTIGLDRYVAMADQYADLGPLYRVSDKLREMAAQGKTFY</sequence>